<keyword id="KW-0067">ATP-binding</keyword>
<keyword id="KW-0963">Cytoplasm</keyword>
<keyword id="KW-0227">DNA damage</keyword>
<keyword id="KW-0233">DNA recombination</keyword>
<keyword id="KW-0234">DNA repair</keyword>
<keyword id="KW-0238">DNA-binding</keyword>
<keyword id="KW-0378">Hydrolase</keyword>
<keyword id="KW-0547">Nucleotide-binding</keyword>
<keyword id="KW-1185">Reference proteome</keyword>
<reference key="1">
    <citation type="journal article" date="2006" name="Proc. Natl. Acad. Sci. U.S.A.">
        <title>The complete genome sequence of Lactobacillus bulgaricus reveals extensive and ongoing reductive evolution.</title>
        <authorList>
            <person name="van de Guchte M."/>
            <person name="Penaud S."/>
            <person name="Grimaldi C."/>
            <person name="Barbe V."/>
            <person name="Bryson K."/>
            <person name="Nicolas P."/>
            <person name="Robert C."/>
            <person name="Oztas S."/>
            <person name="Mangenot S."/>
            <person name="Couloux A."/>
            <person name="Loux V."/>
            <person name="Dervyn R."/>
            <person name="Bossy R."/>
            <person name="Bolotin A."/>
            <person name="Batto J.-M."/>
            <person name="Walunas T."/>
            <person name="Gibrat J.-F."/>
            <person name="Bessieres P."/>
            <person name="Weissenbach J."/>
            <person name="Ehrlich S.D."/>
            <person name="Maguin E."/>
        </authorList>
    </citation>
    <scope>NUCLEOTIDE SEQUENCE [LARGE SCALE GENOMIC DNA]</scope>
    <source>
        <strain>ATCC 11842 / DSM 20081 / BCRC 10696 / JCM 1002 / NBRC 13953 / NCIMB 11778 / NCTC 12712 / WDCM 00102 / Lb 14</strain>
    </source>
</reference>
<accession>Q1G941</accession>
<evidence type="ECO:0000255" key="1">
    <source>
        <dbReference type="HAMAP-Rule" id="MF_00016"/>
    </source>
</evidence>
<gene>
    <name evidence="1" type="primary">ruvB</name>
    <name type="ordered locus">Ldb1613</name>
</gene>
<comment type="function">
    <text evidence="1">The RuvA-RuvB-RuvC complex processes Holliday junction (HJ) DNA during genetic recombination and DNA repair, while the RuvA-RuvB complex plays an important role in the rescue of blocked DNA replication forks via replication fork reversal (RFR). RuvA specifically binds to HJ cruciform DNA, conferring on it an open structure. The RuvB hexamer acts as an ATP-dependent pump, pulling dsDNA into and through the RuvAB complex. RuvB forms 2 homohexamers on either side of HJ DNA bound by 1 or 2 RuvA tetramers; 4 subunits per hexamer contact DNA at a time. Coordinated motions by a converter formed by DNA-disengaged RuvB subunits stimulates ATP hydrolysis and nucleotide exchange. Immobilization of the converter enables RuvB to convert the ATP-contained energy into a lever motion, pulling 2 nucleotides of DNA out of the RuvA tetramer per ATP hydrolyzed, thus driving DNA branch migration. The RuvB motors rotate together with the DNA substrate, which together with the progressing nucleotide cycle form the mechanistic basis for DNA recombination by continuous HJ branch migration. Branch migration allows RuvC to scan DNA until it finds its consensus sequence, where it cleaves and resolves cruciform DNA.</text>
</comment>
<comment type="catalytic activity">
    <reaction evidence="1">
        <text>ATP + H2O = ADP + phosphate + H(+)</text>
        <dbReference type="Rhea" id="RHEA:13065"/>
        <dbReference type="ChEBI" id="CHEBI:15377"/>
        <dbReference type="ChEBI" id="CHEBI:15378"/>
        <dbReference type="ChEBI" id="CHEBI:30616"/>
        <dbReference type="ChEBI" id="CHEBI:43474"/>
        <dbReference type="ChEBI" id="CHEBI:456216"/>
    </reaction>
</comment>
<comment type="subunit">
    <text evidence="1">Homohexamer. Forms an RuvA(8)-RuvB(12)-Holliday junction (HJ) complex. HJ DNA is sandwiched between 2 RuvA tetramers; dsDNA enters through RuvA and exits via RuvB. An RuvB hexamer assembles on each DNA strand where it exits the tetramer. Each RuvB hexamer is contacted by two RuvA subunits (via domain III) on 2 adjacent RuvB subunits; this complex drives branch migration. In the full resolvosome a probable DNA-RuvA(4)-RuvB(12)-RuvC(2) complex forms which resolves the HJ.</text>
</comment>
<comment type="subcellular location">
    <subcellularLocation>
        <location evidence="1">Cytoplasm</location>
    </subcellularLocation>
</comment>
<comment type="domain">
    <text evidence="1">Has 3 domains, the large (RuvB-L) and small ATPase (RuvB-S) domains and the C-terminal head (RuvB-H) domain. The head domain binds DNA, while the ATPase domains jointly bind ATP, ADP or are empty depending on the state of the subunit in the translocation cycle. During a single DNA translocation step the structure of each domain remains the same, but their relative positions change.</text>
</comment>
<comment type="similarity">
    <text evidence="1">Belongs to the RuvB family.</text>
</comment>
<proteinExistence type="inferred from homology"/>
<sequence>MTEEHLTSQEAAEGEEAVELSLRPQLLSQYIGQGHVKKDMEVYIQAARQRDEALDHVLLYGPPGLGKTTLAFVIANELGVNLKSTSGPAIERAGDLVALLTDLEPGDVLFIDEIHRLAKPVEEVLYSAMEDFYIDIVVGEGQTTHAIHLPLPPFTLIGATTLAGQLSAPLRDRFGIVEHMQYYQVEDLEKIILRSSEVFHTKISPQAAHELARRSRGTPRVANRLLKRVRDFAEVKGEKEISLETTAMALKQLQVDSAGLDQTDRKLLRTMILSYGGGPVGIRTLASNIGEDRETIESLYEPYLLQNGFIVMTPRGRVVTQKAYQQLNLPLPGEEE</sequence>
<organism>
    <name type="scientific">Lactobacillus delbrueckii subsp. bulgaricus (strain ATCC 11842 / DSM 20081 / BCRC 10696 / JCM 1002 / NBRC 13953 / NCIMB 11778 / NCTC 12712 / WDCM 00102 / Lb 14)</name>
    <dbReference type="NCBI Taxonomy" id="390333"/>
    <lineage>
        <taxon>Bacteria</taxon>
        <taxon>Bacillati</taxon>
        <taxon>Bacillota</taxon>
        <taxon>Bacilli</taxon>
        <taxon>Lactobacillales</taxon>
        <taxon>Lactobacillaceae</taxon>
        <taxon>Lactobacillus</taxon>
    </lineage>
</organism>
<protein>
    <recommendedName>
        <fullName evidence="1">Holliday junction branch migration complex subunit RuvB</fullName>
        <ecNumber evidence="1">3.6.4.-</ecNumber>
    </recommendedName>
</protein>
<feature type="chain" id="PRO_0000322804" description="Holliday junction branch migration complex subunit RuvB">
    <location>
        <begin position="1"/>
        <end position="336"/>
    </location>
</feature>
<feature type="region of interest" description="Large ATPase domain (RuvB-L)" evidence="1">
    <location>
        <begin position="1"/>
        <end position="183"/>
    </location>
</feature>
<feature type="region of interest" description="Small ATPAse domain (RuvB-S)" evidence="1">
    <location>
        <begin position="184"/>
        <end position="254"/>
    </location>
</feature>
<feature type="region of interest" description="Head domain (RuvB-H)" evidence="1">
    <location>
        <begin position="257"/>
        <end position="336"/>
    </location>
</feature>
<feature type="binding site" evidence="1">
    <location>
        <position position="22"/>
    </location>
    <ligand>
        <name>ATP</name>
        <dbReference type="ChEBI" id="CHEBI:30616"/>
    </ligand>
</feature>
<feature type="binding site" evidence="1">
    <location>
        <position position="23"/>
    </location>
    <ligand>
        <name>ATP</name>
        <dbReference type="ChEBI" id="CHEBI:30616"/>
    </ligand>
</feature>
<feature type="binding site" evidence="1">
    <location>
        <position position="64"/>
    </location>
    <ligand>
        <name>ATP</name>
        <dbReference type="ChEBI" id="CHEBI:30616"/>
    </ligand>
</feature>
<feature type="binding site" evidence="1">
    <location>
        <position position="67"/>
    </location>
    <ligand>
        <name>ATP</name>
        <dbReference type="ChEBI" id="CHEBI:30616"/>
    </ligand>
</feature>
<feature type="binding site" evidence="1">
    <location>
        <position position="68"/>
    </location>
    <ligand>
        <name>ATP</name>
        <dbReference type="ChEBI" id="CHEBI:30616"/>
    </ligand>
</feature>
<feature type="binding site" evidence="1">
    <location>
        <position position="68"/>
    </location>
    <ligand>
        <name>Mg(2+)</name>
        <dbReference type="ChEBI" id="CHEBI:18420"/>
    </ligand>
</feature>
<feature type="binding site" evidence="1">
    <location>
        <position position="69"/>
    </location>
    <ligand>
        <name>ATP</name>
        <dbReference type="ChEBI" id="CHEBI:30616"/>
    </ligand>
</feature>
<feature type="binding site" evidence="1">
    <location>
        <begin position="130"/>
        <end position="132"/>
    </location>
    <ligand>
        <name>ATP</name>
        <dbReference type="ChEBI" id="CHEBI:30616"/>
    </ligand>
</feature>
<feature type="binding site" evidence="1">
    <location>
        <position position="173"/>
    </location>
    <ligand>
        <name>ATP</name>
        <dbReference type="ChEBI" id="CHEBI:30616"/>
    </ligand>
</feature>
<feature type="binding site" evidence="1">
    <location>
        <position position="183"/>
    </location>
    <ligand>
        <name>ATP</name>
        <dbReference type="ChEBI" id="CHEBI:30616"/>
    </ligand>
</feature>
<feature type="binding site" evidence="1">
    <location>
        <position position="220"/>
    </location>
    <ligand>
        <name>ATP</name>
        <dbReference type="ChEBI" id="CHEBI:30616"/>
    </ligand>
</feature>
<feature type="binding site" evidence="1">
    <location>
        <position position="293"/>
    </location>
    <ligand>
        <name>DNA</name>
        <dbReference type="ChEBI" id="CHEBI:16991"/>
    </ligand>
</feature>
<feature type="binding site" evidence="1">
    <location>
        <position position="317"/>
    </location>
    <ligand>
        <name>DNA</name>
        <dbReference type="ChEBI" id="CHEBI:16991"/>
    </ligand>
</feature>
<name>RUVB_LACDA</name>
<dbReference type="EC" id="3.6.4.-" evidence="1"/>
<dbReference type="EMBL" id="CR954253">
    <property type="protein sequence ID" value="CAI98402.1"/>
    <property type="molecule type" value="Genomic_DNA"/>
</dbReference>
<dbReference type="RefSeq" id="WP_003615731.1">
    <property type="nucleotide sequence ID" value="NZ_JQAV01000002.1"/>
</dbReference>
<dbReference type="SMR" id="Q1G941"/>
<dbReference type="STRING" id="390333.Ldb1613"/>
<dbReference type="KEGG" id="ldb:Ldb1613"/>
<dbReference type="PATRIC" id="fig|390333.13.peg.1011"/>
<dbReference type="eggNOG" id="COG2255">
    <property type="taxonomic scope" value="Bacteria"/>
</dbReference>
<dbReference type="HOGENOM" id="CLU_055599_1_0_9"/>
<dbReference type="BioCyc" id="LDEL390333:LDB_RS06970-MONOMER"/>
<dbReference type="Proteomes" id="UP000001259">
    <property type="component" value="Chromosome"/>
</dbReference>
<dbReference type="GO" id="GO:0005737">
    <property type="term" value="C:cytoplasm"/>
    <property type="evidence" value="ECO:0007669"/>
    <property type="project" value="UniProtKB-SubCell"/>
</dbReference>
<dbReference type="GO" id="GO:0048476">
    <property type="term" value="C:Holliday junction resolvase complex"/>
    <property type="evidence" value="ECO:0007669"/>
    <property type="project" value="UniProtKB-UniRule"/>
</dbReference>
<dbReference type="GO" id="GO:0005524">
    <property type="term" value="F:ATP binding"/>
    <property type="evidence" value="ECO:0007669"/>
    <property type="project" value="UniProtKB-UniRule"/>
</dbReference>
<dbReference type="GO" id="GO:0016887">
    <property type="term" value="F:ATP hydrolysis activity"/>
    <property type="evidence" value="ECO:0007669"/>
    <property type="project" value="InterPro"/>
</dbReference>
<dbReference type="GO" id="GO:0000400">
    <property type="term" value="F:four-way junction DNA binding"/>
    <property type="evidence" value="ECO:0007669"/>
    <property type="project" value="UniProtKB-UniRule"/>
</dbReference>
<dbReference type="GO" id="GO:0009378">
    <property type="term" value="F:four-way junction helicase activity"/>
    <property type="evidence" value="ECO:0007669"/>
    <property type="project" value="InterPro"/>
</dbReference>
<dbReference type="GO" id="GO:0006310">
    <property type="term" value="P:DNA recombination"/>
    <property type="evidence" value="ECO:0007669"/>
    <property type="project" value="UniProtKB-UniRule"/>
</dbReference>
<dbReference type="GO" id="GO:0006281">
    <property type="term" value="P:DNA repair"/>
    <property type="evidence" value="ECO:0007669"/>
    <property type="project" value="UniProtKB-UniRule"/>
</dbReference>
<dbReference type="CDD" id="cd00009">
    <property type="entry name" value="AAA"/>
    <property type="match status" value="1"/>
</dbReference>
<dbReference type="Gene3D" id="1.10.8.60">
    <property type="match status" value="1"/>
</dbReference>
<dbReference type="Gene3D" id="3.40.50.300">
    <property type="entry name" value="P-loop containing nucleotide triphosphate hydrolases"/>
    <property type="match status" value="1"/>
</dbReference>
<dbReference type="Gene3D" id="1.10.10.10">
    <property type="entry name" value="Winged helix-like DNA-binding domain superfamily/Winged helix DNA-binding domain"/>
    <property type="match status" value="1"/>
</dbReference>
<dbReference type="HAMAP" id="MF_00016">
    <property type="entry name" value="DNA_HJ_migration_RuvB"/>
    <property type="match status" value="1"/>
</dbReference>
<dbReference type="InterPro" id="IPR003593">
    <property type="entry name" value="AAA+_ATPase"/>
</dbReference>
<dbReference type="InterPro" id="IPR041445">
    <property type="entry name" value="AAA_lid_4"/>
</dbReference>
<dbReference type="InterPro" id="IPR004605">
    <property type="entry name" value="DNA_helicase_Holl-junc_RuvB"/>
</dbReference>
<dbReference type="InterPro" id="IPR027417">
    <property type="entry name" value="P-loop_NTPase"/>
</dbReference>
<dbReference type="InterPro" id="IPR008824">
    <property type="entry name" value="RuvB-like_N"/>
</dbReference>
<dbReference type="InterPro" id="IPR008823">
    <property type="entry name" value="RuvB_C"/>
</dbReference>
<dbReference type="InterPro" id="IPR036388">
    <property type="entry name" value="WH-like_DNA-bd_sf"/>
</dbReference>
<dbReference type="InterPro" id="IPR036390">
    <property type="entry name" value="WH_DNA-bd_sf"/>
</dbReference>
<dbReference type="NCBIfam" id="NF000868">
    <property type="entry name" value="PRK00080.1"/>
    <property type="match status" value="1"/>
</dbReference>
<dbReference type="NCBIfam" id="TIGR00635">
    <property type="entry name" value="ruvB"/>
    <property type="match status" value="1"/>
</dbReference>
<dbReference type="PANTHER" id="PTHR42848">
    <property type="match status" value="1"/>
</dbReference>
<dbReference type="PANTHER" id="PTHR42848:SF1">
    <property type="entry name" value="HOLLIDAY JUNCTION BRANCH MIGRATION COMPLEX SUBUNIT RUVB"/>
    <property type="match status" value="1"/>
</dbReference>
<dbReference type="Pfam" id="PF17864">
    <property type="entry name" value="AAA_lid_4"/>
    <property type="match status" value="1"/>
</dbReference>
<dbReference type="Pfam" id="PF05491">
    <property type="entry name" value="RuvB_C"/>
    <property type="match status" value="1"/>
</dbReference>
<dbReference type="Pfam" id="PF05496">
    <property type="entry name" value="RuvB_N"/>
    <property type="match status" value="1"/>
</dbReference>
<dbReference type="SMART" id="SM00382">
    <property type="entry name" value="AAA"/>
    <property type="match status" value="1"/>
</dbReference>
<dbReference type="SUPFAM" id="SSF52540">
    <property type="entry name" value="P-loop containing nucleoside triphosphate hydrolases"/>
    <property type="match status" value="1"/>
</dbReference>
<dbReference type="SUPFAM" id="SSF46785">
    <property type="entry name" value="Winged helix' DNA-binding domain"/>
    <property type="match status" value="1"/>
</dbReference>